<protein>
    <recommendedName>
        <fullName>Histone H2A.1</fullName>
    </recommendedName>
    <alternativeName>
        <fullName>wcH2A-9</fullName>
    </alternativeName>
</protein>
<gene>
    <name type="primary">H2A-9</name>
    <name type="synonym">TH274</name>
</gene>
<sequence length="146" mass="15586">MAGRKGGDRKKAVTRSVKAGLQFPVGRIGRYLKKGRYAQRVGSGAPVYLAAVLEYLAAEVLELAGNAAKDNKKTRIIPRHLLLAVRNDQELGRLLAGVTIAHGGVIPNINSVLLPKKSPAAAEKEAKSPKKKTSTKSPKKKVAAKE</sequence>
<dbReference type="EMBL" id="D38090">
    <property type="protein sequence ID" value="BAA07279.1"/>
    <property type="molecule type" value="mRNA"/>
</dbReference>
<dbReference type="EMBL" id="X94973">
    <property type="protein sequence ID" value="CAA64423.1"/>
    <property type="molecule type" value="Genomic_DNA"/>
</dbReference>
<dbReference type="EMBL" id="L75802">
    <property type="protein sequence ID" value="AAB00193.1"/>
    <property type="molecule type" value="Genomic_DNA"/>
</dbReference>
<dbReference type="PIR" id="A02602">
    <property type="entry name" value="HSWT91"/>
</dbReference>
<dbReference type="PIR" id="S53519">
    <property type="entry name" value="S53519"/>
</dbReference>
<dbReference type="SMR" id="P02275"/>
<dbReference type="STRING" id="4565.P02275"/>
<dbReference type="PaxDb" id="4565-Traes_6AS_AFBB715C3.3"/>
<dbReference type="EnsemblPlants" id="TraesARI6A03G03200020.1">
    <property type="protein sequence ID" value="TraesARI6A03G03200020.1"/>
    <property type="gene ID" value="TraesARI6A03G03200020"/>
</dbReference>
<dbReference type="EnsemblPlants" id="TraesARI6B03G03391370.1">
    <property type="protein sequence ID" value="TraesARI6B03G03391370.1"/>
    <property type="gene ID" value="TraesARI6B03G03391370"/>
</dbReference>
<dbReference type="EnsemblPlants" id="TraesARI6B03G03391390.1">
    <property type="protein sequence ID" value="TraesARI6B03G03391390.1"/>
    <property type="gene ID" value="TraesARI6B03G03391390"/>
</dbReference>
<dbReference type="EnsemblPlants" id="TraesARI6D03G03616340.1">
    <property type="protein sequence ID" value="TraesARI6D03G03616340.1"/>
    <property type="gene ID" value="TraesARI6D03G03616340"/>
</dbReference>
<dbReference type="EnsemblPlants" id="TraesCAD_scaffold_000238_01G000100.1">
    <property type="protein sequence ID" value="TraesCAD_scaffold_000238_01G000100.1"/>
    <property type="gene ID" value="TraesCAD_scaffold_000238_01G000100"/>
</dbReference>
<dbReference type="EnsemblPlants" id="TraesCAD_scaffold_000310_01G000600.1">
    <property type="protein sequence ID" value="TraesCAD_scaffold_000310_01G000600.1"/>
    <property type="gene ID" value="TraesCAD_scaffold_000310_01G000600"/>
</dbReference>
<dbReference type="EnsemblPlants" id="TraesCAD_scaffold_062092_01G000200.1">
    <property type="protein sequence ID" value="TraesCAD_scaffold_062092_01G000200.1"/>
    <property type="gene ID" value="TraesCAD_scaffold_062092_01G000200"/>
</dbReference>
<dbReference type="EnsemblPlants" id="TraesCAD_scaffold_109410_01G000200.1">
    <property type="protein sequence ID" value="TraesCAD_scaffold_109410_01G000200.1"/>
    <property type="gene ID" value="TraesCAD_scaffold_109410_01G000200"/>
</dbReference>
<dbReference type="EnsemblPlants" id="TraesCAD_scaffold_144309_01G000100.1">
    <property type="protein sequence ID" value="TraesCAD_scaffold_144309_01G000100.1"/>
    <property type="gene ID" value="TraesCAD_scaffold_144309_01G000100"/>
</dbReference>
<dbReference type="EnsemblPlants" id="TraesCLE_scaffold_016178_01G000200.1">
    <property type="protein sequence ID" value="TraesCLE_scaffold_016178_01G000200.1"/>
    <property type="gene ID" value="TraesCLE_scaffold_016178_01G000200"/>
</dbReference>
<dbReference type="EnsemblPlants" id="TraesCLE_scaffold_017125_01G000300.1">
    <property type="protein sequence ID" value="TraesCLE_scaffold_017125_01G000300.1"/>
    <property type="gene ID" value="TraesCLE_scaffold_017125_01G000300"/>
</dbReference>
<dbReference type="EnsemblPlants" id="TraesCLE_scaffold_088409_01G000100.1">
    <property type="protein sequence ID" value="TraesCLE_scaffold_088409_01G000100.1"/>
    <property type="gene ID" value="TraesCLE_scaffold_088409_01G000100"/>
</dbReference>
<dbReference type="EnsemblPlants" id="TraesCLE_scaffold_090853_01G000200.1">
    <property type="protein sequence ID" value="TraesCLE_scaffold_090853_01G000200.1"/>
    <property type="gene ID" value="TraesCLE_scaffold_090853_01G000200"/>
</dbReference>
<dbReference type="EnsemblPlants" id="TraesCS6B02G049200.1">
    <property type="protein sequence ID" value="TraesCS6B02G049200.1"/>
    <property type="gene ID" value="TraesCS6B02G049200"/>
</dbReference>
<dbReference type="EnsemblPlants" id="TraesCS6B02G049400.1">
    <property type="protein sequence ID" value="TraesCS6B02G049400.1"/>
    <property type="gene ID" value="TraesCS6B02G049400"/>
</dbReference>
<dbReference type="EnsemblPlants" id="TraesCS6B03G0111500.1">
    <property type="protein sequence ID" value="TraesCS6B03G0111500.1.CDS"/>
    <property type="gene ID" value="TraesCS6B03G0111500"/>
</dbReference>
<dbReference type="EnsemblPlants" id="TraesCS6B03G0111900.1">
    <property type="protein sequence ID" value="TraesCS6B03G0111900.1.CDS"/>
    <property type="gene ID" value="TraesCS6B03G0111900"/>
</dbReference>
<dbReference type="EnsemblPlants" id="TraesCS6D02G040700.1">
    <property type="protein sequence ID" value="TraesCS6D02G040700.1"/>
    <property type="gene ID" value="TraesCS6D02G040700"/>
</dbReference>
<dbReference type="EnsemblPlants" id="TraesCS6D03G0080000.1">
    <property type="protein sequence ID" value="TraesCS6D03G0080000.1.CDS"/>
    <property type="gene ID" value="TraesCS6D03G0080000"/>
</dbReference>
<dbReference type="EnsemblPlants" id="TraesJAG6B03G03424060.1">
    <property type="protein sequence ID" value="TraesJAG6B03G03424060.1"/>
    <property type="gene ID" value="TraesJAG6B03G03424060"/>
</dbReference>
<dbReference type="EnsemblPlants" id="TraesJAG6B03G03424230.1">
    <property type="protein sequence ID" value="TraesJAG6B03G03424230.1"/>
    <property type="gene ID" value="TraesJAG6B03G03424230"/>
</dbReference>
<dbReference type="EnsemblPlants" id="TraesJAG6B03G03424260.1">
    <property type="protein sequence ID" value="TraesJAG6B03G03424260.1"/>
    <property type="gene ID" value="TraesJAG6B03G03424260"/>
</dbReference>
<dbReference type="EnsemblPlants" id="TraesJAG6D03G03643390.1">
    <property type="protein sequence ID" value="TraesJAG6D03G03643390.1"/>
    <property type="gene ID" value="TraesJAG6D03G03643390"/>
</dbReference>
<dbReference type="EnsemblPlants" id="TraesJAGUn03G04487780.1">
    <property type="protein sequence ID" value="TraesJAGUn03G04487780.1"/>
    <property type="gene ID" value="TraesJAGUn03G04487780"/>
</dbReference>
<dbReference type="EnsemblPlants" id="TraesJUL6A03G03263710.1">
    <property type="protein sequence ID" value="TraesJUL6A03G03263710.1"/>
    <property type="gene ID" value="TraesJUL6A03G03263710"/>
</dbReference>
<dbReference type="EnsemblPlants" id="TraesJUL6B03G03460450.1">
    <property type="protein sequence ID" value="TraesJUL6B03G03460450.1"/>
    <property type="gene ID" value="TraesJUL6B03G03460450"/>
</dbReference>
<dbReference type="EnsemblPlants" id="TraesJUL6B03G03460650.1">
    <property type="protein sequence ID" value="TraesJUL6B03G03460650.1"/>
    <property type="gene ID" value="TraesJUL6B03G03460650"/>
</dbReference>
<dbReference type="EnsemblPlants" id="TraesJUL6B03G03460680.1">
    <property type="protein sequence ID" value="TraesJUL6B03G03460680.1"/>
    <property type="gene ID" value="TraesJUL6B03G03460680"/>
</dbReference>
<dbReference type="EnsemblPlants" id="TraesJUL6D03G03673510.1">
    <property type="protein sequence ID" value="TraesJUL6D03G03673510.1"/>
    <property type="gene ID" value="TraesJUL6D03G03673510"/>
</dbReference>
<dbReference type="EnsemblPlants" id="TraesKAR6A01G0000690.1">
    <property type="protein sequence ID" value="cds.TraesKAR6A01G0000690.1"/>
    <property type="gene ID" value="TraesKAR6A01G0000690"/>
</dbReference>
<dbReference type="EnsemblPlants" id="TraesKAR6A01G0000780.1">
    <property type="protein sequence ID" value="cds.TraesKAR6A01G0000780.1"/>
    <property type="gene ID" value="TraesKAR6A01G0000780"/>
</dbReference>
<dbReference type="EnsemblPlants" id="TraesKAR6A01G0000780.2">
    <property type="protein sequence ID" value="cds.TraesKAR6A01G0000780.2"/>
    <property type="gene ID" value="TraesKAR6A01G0000780"/>
</dbReference>
<dbReference type="EnsemblPlants" id="TraesKAR6A01G0000870.1">
    <property type="protein sequence ID" value="cds.TraesKAR6A01G0000870.1"/>
    <property type="gene ID" value="TraesKAR6A01G0000870"/>
</dbReference>
<dbReference type="EnsemblPlants" id="TraesKAR6A01G0001060.1">
    <property type="protein sequence ID" value="cds.TraesKAR6A01G0001060.1"/>
    <property type="gene ID" value="TraesKAR6A01G0001060"/>
</dbReference>
<dbReference type="EnsemblPlants" id="TraesKAR6A01G0001160.1">
    <property type="protein sequence ID" value="cds.TraesKAR6A01G0001160.1"/>
    <property type="gene ID" value="TraesKAR6A01G0001160"/>
</dbReference>
<dbReference type="EnsemblPlants" id="TraesKAR6A01G0001250.1">
    <property type="protein sequence ID" value="cds.TraesKAR6A01G0001250.1"/>
    <property type="gene ID" value="TraesKAR6A01G0001250"/>
</dbReference>
<dbReference type="EnsemblPlants" id="TraesKAR6A01G0001340.1">
    <property type="protein sequence ID" value="cds.TraesKAR6A01G0001340.1"/>
    <property type="gene ID" value="TraesKAR6A01G0001340"/>
</dbReference>
<dbReference type="EnsemblPlants" id="TraesKAR6B01G0022780.1">
    <property type="protein sequence ID" value="cds.TraesKAR6B01G0022780.1"/>
    <property type="gene ID" value="TraesKAR6B01G0022780"/>
</dbReference>
<dbReference type="EnsemblPlants" id="TraesKAR6B01G0022960.1">
    <property type="protein sequence ID" value="cds.TraesKAR6B01G0022960.1"/>
    <property type="gene ID" value="TraesKAR6B01G0022960"/>
</dbReference>
<dbReference type="EnsemblPlants" id="TraesKAR6B01G0022960.2">
    <property type="protein sequence ID" value="cds.TraesKAR6B01G0022960.2"/>
    <property type="gene ID" value="TraesKAR6B01G0022960"/>
</dbReference>
<dbReference type="EnsemblPlants" id="TraesKAR6B01G0022960.3">
    <property type="protein sequence ID" value="cds.TraesKAR6B01G0022960.3"/>
    <property type="gene ID" value="TraesKAR6B01G0022960"/>
</dbReference>
<dbReference type="EnsemblPlants" id="TraesKAR6D01G0012740.3">
    <property type="protein sequence ID" value="cds.TraesKAR6D01G0012740.3"/>
    <property type="gene ID" value="TraesKAR6D01G0012740"/>
</dbReference>
<dbReference type="EnsemblPlants" id="TraesLAC6A03G03200150.1">
    <property type="protein sequence ID" value="TraesLAC6A03G03200150.1"/>
    <property type="gene ID" value="TraesLAC6A03G03200150"/>
</dbReference>
<dbReference type="EnsemblPlants" id="TraesLAC6B03G03383530.1">
    <property type="protein sequence ID" value="TraesLAC6B03G03383530.1"/>
    <property type="gene ID" value="TraesLAC6B03G03383530"/>
</dbReference>
<dbReference type="EnsemblPlants" id="TraesLAC6B03G03383550.1">
    <property type="protein sequence ID" value="TraesLAC6B03G03383550.1"/>
    <property type="gene ID" value="TraesLAC6B03G03383550"/>
</dbReference>
<dbReference type="EnsemblPlants" id="TraesLAC6B03G03383740.1">
    <property type="protein sequence ID" value="TraesLAC6B03G03383740.1"/>
    <property type="gene ID" value="TraesLAC6B03G03383740"/>
</dbReference>
<dbReference type="EnsemblPlants" id="TraesLAC6D03G03606100.1">
    <property type="protein sequence ID" value="TraesLAC6D03G03606100.1"/>
    <property type="gene ID" value="TraesLAC6D03G03606100"/>
</dbReference>
<dbReference type="EnsemblPlants" id="TraesLDM6A03G03249450.1">
    <property type="protein sequence ID" value="TraesLDM6A03G03249450.1"/>
    <property type="gene ID" value="TraesLDM6A03G03249450"/>
</dbReference>
<dbReference type="EnsemblPlants" id="TraesLDM6B03G03437000.1">
    <property type="protein sequence ID" value="TraesLDM6B03G03437000.1"/>
    <property type="gene ID" value="TraesLDM6B03G03437000"/>
</dbReference>
<dbReference type="EnsemblPlants" id="TraesLDM6B03G03437020.1">
    <property type="protein sequence ID" value="TraesLDM6B03G03437020.1"/>
    <property type="gene ID" value="TraesLDM6B03G03437020"/>
</dbReference>
<dbReference type="EnsemblPlants" id="TraesLDM6D03G03653760.1">
    <property type="protein sequence ID" value="TraesLDM6D03G03653760.1"/>
    <property type="gene ID" value="TraesLDM6D03G03653760"/>
</dbReference>
<dbReference type="EnsemblPlants" id="TraesMAC6A03G03243950.1">
    <property type="protein sequence ID" value="TraesMAC6A03G03243950.1"/>
    <property type="gene ID" value="TraesMAC6A03G03243950"/>
</dbReference>
<dbReference type="EnsemblPlants" id="TraesMAC6B03G03430950.1">
    <property type="protein sequence ID" value="TraesMAC6B03G03430950.1"/>
    <property type="gene ID" value="TraesMAC6B03G03430950"/>
</dbReference>
<dbReference type="EnsemblPlants" id="TraesMAC6B03G03431140.1">
    <property type="protein sequence ID" value="TraesMAC6B03G03431140.1"/>
    <property type="gene ID" value="TraesMAC6B03G03431140"/>
</dbReference>
<dbReference type="EnsemblPlants" id="TraesMAC6B03G03431160.1">
    <property type="protein sequence ID" value="TraesMAC6B03G03431160.1"/>
    <property type="gene ID" value="TraesMAC6B03G03431160"/>
</dbReference>
<dbReference type="EnsemblPlants" id="TraesMAC6D03G03650160.1">
    <property type="protein sequence ID" value="TraesMAC6D03G03650160.1"/>
    <property type="gene ID" value="TraesMAC6D03G03650160"/>
</dbReference>
<dbReference type="EnsemblPlants" id="TraesNOR6B03G03466580.1">
    <property type="protein sequence ID" value="TraesNOR6B03G03466580.1"/>
    <property type="gene ID" value="TraesNOR6B03G03466580"/>
</dbReference>
<dbReference type="EnsemblPlants" id="TraesNOR6B03G03466610.1">
    <property type="protein sequence ID" value="TraesNOR6B03G03466610.1"/>
    <property type="gene ID" value="TraesNOR6B03G03466610"/>
</dbReference>
<dbReference type="EnsemblPlants" id="TraesNOR6D03G03691080.1">
    <property type="protein sequence ID" value="TraesNOR6D03G03691080.1"/>
    <property type="gene ID" value="TraesNOR6D03G03691080"/>
</dbReference>
<dbReference type="EnsemblPlants" id="TraesPARA_EIv1.0_1896450.1">
    <property type="protein sequence ID" value="TraesPARA_EIv1.0_1896450.1.CDS"/>
    <property type="gene ID" value="TraesPARA_EIv1.0_1896450"/>
</dbReference>
<dbReference type="EnsemblPlants" id="TraesPARA_EIv1.0_2004550.1">
    <property type="protein sequence ID" value="TraesPARA_EIv1.0_2004550.1.CDS"/>
    <property type="gene ID" value="TraesPARA_EIv1.0_2004550"/>
</dbReference>
<dbReference type="EnsemblPlants" id="TraesPARA_EIv1.0_2004650.1">
    <property type="protein sequence ID" value="TraesPARA_EIv1.0_2004650.1.CDS"/>
    <property type="gene ID" value="TraesPARA_EIv1.0_2004650"/>
</dbReference>
<dbReference type="EnsemblPlants" id="TraesPARA_EIv1.0_2004670.1">
    <property type="protein sequence ID" value="TraesPARA_EIv1.0_2004670.1.CDS"/>
    <property type="gene ID" value="TraesPARA_EIv1.0_2004670"/>
</dbReference>
<dbReference type="EnsemblPlants" id="TraesPARA_EIv1.0_2217270.1">
    <property type="protein sequence ID" value="TraesPARA_EIv1.0_2217270.1.CDS"/>
    <property type="gene ID" value="TraesPARA_EIv1.0_2217270"/>
</dbReference>
<dbReference type="EnsemblPlants" id="TraesRN6B0100098900.1">
    <property type="protein sequence ID" value="TraesRN6B0100098900.1"/>
    <property type="gene ID" value="TraesRN6B0100098900"/>
</dbReference>
<dbReference type="EnsemblPlants" id="TraesRN6B0100099900.1">
    <property type="protein sequence ID" value="TraesRN6B0100099900.1"/>
    <property type="gene ID" value="TraesRN6B0100099900"/>
</dbReference>
<dbReference type="EnsemblPlants" id="TraesRN6B0100100300.1">
    <property type="protein sequence ID" value="TraesRN6B0100100300.1"/>
    <property type="gene ID" value="TraesRN6B0100100300"/>
</dbReference>
<dbReference type="EnsemblPlants" id="TraesROB_scaffold_004261_01G000300.1">
    <property type="protein sequence ID" value="TraesROB_scaffold_004261_01G000300.1"/>
    <property type="gene ID" value="TraesROB_scaffold_004261_01G000300"/>
</dbReference>
<dbReference type="EnsemblPlants" id="TraesROB_scaffold_031739_01G000300.1">
    <property type="protein sequence ID" value="TraesROB_scaffold_031739_01G000300.1"/>
    <property type="gene ID" value="TraesROB_scaffold_031739_01G000300"/>
</dbReference>
<dbReference type="EnsemblPlants" id="TraesROB_scaffold_041730_01G000500.1">
    <property type="protein sequence ID" value="TraesROB_scaffold_041730_01G000500.1"/>
    <property type="gene ID" value="TraesROB_scaffold_041730_01G000500"/>
</dbReference>
<dbReference type="EnsemblPlants" id="TraesROB_scaffold_064611_01G000200.1">
    <property type="protein sequence ID" value="TraesROB_scaffold_064611_01G000200.1"/>
    <property type="gene ID" value="TraesROB_scaffold_064611_01G000200"/>
</dbReference>
<dbReference type="EnsemblPlants" id="TraesSTA6A03G03235570.1">
    <property type="protein sequence ID" value="TraesSTA6A03G03235570.1"/>
    <property type="gene ID" value="TraesSTA6A03G03235570"/>
</dbReference>
<dbReference type="EnsemblPlants" id="TraesSTA6A03G03235650.1">
    <property type="protein sequence ID" value="TraesSTA6A03G03235650.1"/>
    <property type="gene ID" value="TraesSTA6A03G03235650"/>
</dbReference>
<dbReference type="EnsemblPlants" id="TraesSTA6B03G03424170.1">
    <property type="protein sequence ID" value="TraesSTA6B03G03424170.1"/>
    <property type="gene ID" value="TraesSTA6B03G03424170"/>
</dbReference>
<dbReference type="EnsemblPlants" id="TraesSTA6B03G03424360.1">
    <property type="protein sequence ID" value="TraesSTA6B03G03424360.1"/>
    <property type="gene ID" value="TraesSTA6B03G03424360"/>
</dbReference>
<dbReference type="EnsemblPlants" id="TraesSTA6B03G03424380.1">
    <property type="protein sequence ID" value="TraesSTA6B03G03424380.1"/>
    <property type="gene ID" value="TraesSTA6B03G03424380"/>
</dbReference>
<dbReference type="EnsemblPlants" id="TraesSTA6D03G03642970.1">
    <property type="protein sequence ID" value="TraesSTA6D03G03642970.1"/>
    <property type="gene ID" value="TraesSTA6D03G03642970"/>
</dbReference>
<dbReference type="EnsemblPlants" id="TraesSYM6A03G03185230.1">
    <property type="protein sequence ID" value="TraesSYM6A03G03185230.1"/>
    <property type="gene ID" value="TraesSYM6A03G03185230"/>
</dbReference>
<dbReference type="EnsemblPlants" id="TraesSYM6B03G03376230.1">
    <property type="protein sequence ID" value="TraesSYM6B03G03376230.1"/>
    <property type="gene ID" value="TraesSYM6B03G03376230"/>
</dbReference>
<dbReference type="EnsemblPlants" id="TraesSYM6B03G03376240.1">
    <property type="protein sequence ID" value="TraesSYM6B03G03376240.1"/>
    <property type="gene ID" value="TraesSYM6B03G03376240"/>
</dbReference>
<dbReference type="EnsemblPlants" id="TraesSYM6B03G03376310.1">
    <property type="protein sequence ID" value="TraesSYM6B03G03376310.1"/>
    <property type="gene ID" value="TraesSYM6B03G03376310"/>
</dbReference>
<dbReference type="EnsemblPlants" id="TraesSYM6B03G03376340.1">
    <property type="protein sequence ID" value="TraesSYM6B03G03376340.1"/>
    <property type="gene ID" value="TraesSYM6B03G03376340"/>
</dbReference>
<dbReference type="EnsemblPlants" id="TraesSYM6D03G03596130.1">
    <property type="protein sequence ID" value="TraesSYM6D03G03596130.1"/>
    <property type="gene ID" value="TraesSYM6D03G03596130"/>
</dbReference>
<dbReference type="EnsemblPlants" id="TraesWEE_scaffold_008448_01G000500.1">
    <property type="protein sequence ID" value="TraesWEE_scaffold_008448_01G000500.1"/>
    <property type="gene ID" value="TraesWEE_scaffold_008448_01G000500"/>
</dbReference>
<dbReference type="EnsemblPlants" id="TraesWEE_scaffold_021255_01G000300.1">
    <property type="protein sequence ID" value="TraesWEE_scaffold_021255_01G000300.1"/>
    <property type="gene ID" value="TraesWEE_scaffold_021255_01G000300"/>
</dbReference>
<dbReference type="EnsemblPlants" id="TraesWEE_scaffold_059022_01G000200.1">
    <property type="protein sequence ID" value="TraesWEE_scaffold_059022_01G000200.1"/>
    <property type="gene ID" value="TraesWEE_scaffold_059022_01G000200"/>
</dbReference>
<dbReference type="EnsemblPlants" id="TraesWEE_scaffold_149981_01G000200.1">
    <property type="protein sequence ID" value="TraesWEE_scaffold_149981_01G000200.1"/>
    <property type="gene ID" value="TraesWEE_scaffold_149981_01G000200"/>
</dbReference>
<dbReference type="Gramene" id="TraesARI6A03G03200020.1">
    <property type="protein sequence ID" value="TraesARI6A03G03200020.1"/>
    <property type="gene ID" value="TraesARI6A03G03200020"/>
</dbReference>
<dbReference type="Gramene" id="TraesARI6B03G03391370.1">
    <property type="protein sequence ID" value="TraesARI6B03G03391370.1"/>
    <property type="gene ID" value="TraesARI6B03G03391370"/>
</dbReference>
<dbReference type="Gramene" id="TraesARI6B03G03391390.1">
    <property type="protein sequence ID" value="TraesARI6B03G03391390.1"/>
    <property type="gene ID" value="TraesARI6B03G03391390"/>
</dbReference>
<dbReference type="Gramene" id="TraesARI6D03G03616340.1">
    <property type="protein sequence ID" value="TraesARI6D03G03616340.1"/>
    <property type="gene ID" value="TraesARI6D03G03616340"/>
</dbReference>
<dbReference type="Gramene" id="TraesCAD_scaffold_000238_01G000100.1">
    <property type="protein sequence ID" value="TraesCAD_scaffold_000238_01G000100.1"/>
    <property type="gene ID" value="TraesCAD_scaffold_000238_01G000100"/>
</dbReference>
<dbReference type="Gramene" id="TraesCAD_scaffold_000310_01G000600.1">
    <property type="protein sequence ID" value="TraesCAD_scaffold_000310_01G000600.1"/>
    <property type="gene ID" value="TraesCAD_scaffold_000310_01G000600"/>
</dbReference>
<dbReference type="Gramene" id="TraesCAD_scaffold_062092_01G000200.1">
    <property type="protein sequence ID" value="TraesCAD_scaffold_062092_01G000200.1"/>
    <property type="gene ID" value="TraesCAD_scaffold_062092_01G000200"/>
</dbReference>
<dbReference type="Gramene" id="TraesCAD_scaffold_109410_01G000200.1">
    <property type="protein sequence ID" value="TraesCAD_scaffold_109410_01G000200.1"/>
    <property type="gene ID" value="TraesCAD_scaffold_109410_01G000200"/>
</dbReference>
<dbReference type="Gramene" id="TraesCAD_scaffold_144309_01G000100.1">
    <property type="protein sequence ID" value="TraesCAD_scaffold_144309_01G000100.1"/>
    <property type="gene ID" value="TraesCAD_scaffold_144309_01G000100"/>
</dbReference>
<dbReference type="Gramene" id="TraesCLE_scaffold_016178_01G000200.1">
    <property type="protein sequence ID" value="TraesCLE_scaffold_016178_01G000200.1"/>
    <property type="gene ID" value="TraesCLE_scaffold_016178_01G000200"/>
</dbReference>
<dbReference type="Gramene" id="TraesCLE_scaffold_017125_01G000300.1">
    <property type="protein sequence ID" value="TraesCLE_scaffold_017125_01G000300.1"/>
    <property type="gene ID" value="TraesCLE_scaffold_017125_01G000300"/>
</dbReference>
<dbReference type="Gramene" id="TraesCLE_scaffold_088409_01G000100.1">
    <property type="protein sequence ID" value="TraesCLE_scaffold_088409_01G000100.1"/>
    <property type="gene ID" value="TraesCLE_scaffold_088409_01G000100"/>
</dbReference>
<dbReference type="Gramene" id="TraesCLE_scaffold_090853_01G000200.1">
    <property type="protein sequence ID" value="TraesCLE_scaffold_090853_01G000200.1"/>
    <property type="gene ID" value="TraesCLE_scaffold_090853_01G000200"/>
</dbReference>
<dbReference type="Gramene" id="TraesCS6B02G049200.1">
    <property type="protein sequence ID" value="TraesCS6B02G049200.1"/>
    <property type="gene ID" value="TraesCS6B02G049200"/>
</dbReference>
<dbReference type="Gramene" id="TraesCS6B02G049400.1">
    <property type="protein sequence ID" value="TraesCS6B02G049400.1"/>
    <property type="gene ID" value="TraesCS6B02G049400"/>
</dbReference>
<dbReference type="Gramene" id="TraesCS6B03G0111500.1">
    <property type="protein sequence ID" value="TraesCS6B03G0111500.1.CDS"/>
    <property type="gene ID" value="TraesCS6B03G0111500"/>
</dbReference>
<dbReference type="Gramene" id="TraesCS6B03G0111900.1">
    <property type="protein sequence ID" value="TraesCS6B03G0111900.1.CDS"/>
    <property type="gene ID" value="TraesCS6B03G0111900"/>
</dbReference>
<dbReference type="Gramene" id="TraesCS6D02G040700.1">
    <property type="protein sequence ID" value="TraesCS6D02G040700.1"/>
    <property type="gene ID" value="TraesCS6D02G040700"/>
</dbReference>
<dbReference type="Gramene" id="TraesCS6D03G0080000.1">
    <property type="protein sequence ID" value="TraesCS6D03G0080000.1.CDS"/>
    <property type="gene ID" value="TraesCS6D03G0080000"/>
</dbReference>
<dbReference type="Gramene" id="TraesJAG6B03G03424060.1">
    <property type="protein sequence ID" value="TraesJAG6B03G03424060.1"/>
    <property type="gene ID" value="TraesJAG6B03G03424060"/>
</dbReference>
<dbReference type="Gramene" id="TraesJAG6B03G03424230.1">
    <property type="protein sequence ID" value="TraesJAG6B03G03424230.1"/>
    <property type="gene ID" value="TraesJAG6B03G03424230"/>
</dbReference>
<dbReference type="Gramene" id="TraesJAG6B03G03424260.1">
    <property type="protein sequence ID" value="TraesJAG6B03G03424260.1"/>
    <property type="gene ID" value="TraesJAG6B03G03424260"/>
</dbReference>
<dbReference type="Gramene" id="TraesJAG6D03G03643390.1">
    <property type="protein sequence ID" value="TraesJAG6D03G03643390.1"/>
    <property type="gene ID" value="TraesJAG6D03G03643390"/>
</dbReference>
<dbReference type="Gramene" id="TraesJAGUn03G04487780.1">
    <property type="protein sequence ID" value="TraesJAGUn03G04487780.1"/>
    <property type="gene ID" value="TraesJAGUn03G04487780"/>
</dbReference>
<dbReference type="Gramene" id="TraesJUL6A03G03263710.1">
    <property type="protein sequence ID" value="TraesJUL6A03G03263710.1"/>
    <property type="gene ID" value="TraesJUL6A03G03263710"/>
</dbReference>
<dbReference type="Gramene" id="TraesJUL6B03G03460450.1">
    <property type="protein sequence ID" value="TraesJUL6B03G03460450.1"/>
    <property type="gene ID" value="TraesJUL6B03G03460450"/>
</dbReference>
<dbReference type="Gramene" id="TraesJUL6B03G03460650.1">
    <property type="protein sequence ID" value="TraesJUL6B03G03460650.1"/>
    <property type="gene ID" value="TraesJUL6B03G03460650"/>
</dbReference>
<dbReference type="Gramene" id="TraesJUL6B03G03460680.1">
    <property type="protein sequence ID" value="TraesJUL6B03G03460680.1"/>
    <property type="gene ID" value="TraesJUL6B03G03460680"/>
</dbReference>
<dbReference type="Gramene" id="TraesJUL6D03G03673510.1">
    <property type="protein sequence ID" value="TraesJUL6D03G03673510.1"/>
    <property type="gene ID" value="TraesJUL6D03G03673510"/>
</dbReference>
<dbReference type="Gramene" id="TraesKAR6A01G0000690.1">
    <property type="protein sequence ID" value="cds.TraesKAR6A01G0000690.1"/>
    <property type="gene ID" value="TraesKAR6A01G0000690"/>
</dbReference>
<dbReference type="Gramene" id="TraesKAR6A01G0000780.1">
    <property type="protein sequence ID" value="cds.TraesKAR6A01G0000780.1"/>
    <property type="gene ID" value="TraesKAR6A01G0000780"/>
</dbReference>
<dbReference type="Gramene" id="TraesKAR6A01G0000780.2">
    <property type="protein sequence ID" value="cds.TraesKAR6A01G0000780.2"/>
    <property type="gene ID" value="TraesKAR6A01G0000780"/>
</dbReference>
<dbReference type="Gramene" id="TraesKAR6A01G0000870.1">
    <property type="protein sequence ID" value="cds.TraesKAR6A01G0000870.1"/>
    <property type="gene ID" value="TraesKAR6A01G0000870"/>
</dbReference>
<dbReference type="Gramene" id="TraesKAR6A01G0001060.1">
    <property type="protein sequence ID" value="cds.TraesKAR6A01G0001060.1"/>
    <property type="gene ID" value="TraesKAR6A01G0001060"/>
</dbReference>
<dbReference type="Gramene" id="TraesKAR6A01G0001160.1">
    <property type="protein sequence ID" value="cds.TraesKAR6A01G0001160.1"/>
    <property type="gene ID" value="TraesKAR6A01G0001160"/>
</dbReference>
<dbReference type="Gramene" id="TraesKAR6A01G0001250.1">
    <property type="protein sequence ID" value="cds.TraesKAR6A01G0001250.1"/>
    <property type="gene ID" value="TraesKAR6A01G0001250"/>
</dbReference>
<dbReference type="Gramene" id="TraesKAR6A01G0001340.1">
    <property type="protein sequence ID" value="cds.TraesKAR6A01G0001340.1"/>
    <property type="gene ID" value="TraesKAR6A01G0001340"/>
</dbReference>
<dbReference type="Gramene" id="TraesKAR6B01G0022780.1">
    <property type="protein sequence ID" value="cds.TraesKAR6B01G0022780.1"/>
    <property type="gene ID" value="TraesKAR6B01G0022780"/>
</dbReference>
<dbReference type="Gramene" id="TraesKAR6B01G0022960.1">
    <property type="protein sequence ID" value="cds.TraesKAR6B01G0022960.1"/>
    <property type="gene ID" value="TraesKAR6B01G0022960"/>
</dbReference>
<dbReference type="Gramene" id="TraesKAR6B01G0022960.2">
    <property type="protein sequence ID" value="cds.TraesKAR6B01G0022960.2"/>
    <property type="gene ID" value="TraesKAR6B01G0022960"/>
</dbReference>
<dbReference type="Gramene" id="TraesKAR6B01G0022960.3">
    <property type="protein sequence ID" value="cds.TraesKAR6B01G0022960.3"/>
    <property type="gene ID" value="TraesKAR6B01G0022960"/>
</dbReference>
<dbReference type="Gramene" id="TraesKAR6D01G0012740.3">
    <property type="protein sequence ID" value="cds.TraesKAR6D01G0012740.3"/>
    <property type="gene ID" value="TraesKAR6D01G0012740"/>
</dbReference>
<dbReference type="Gramene" id="TraesLAC6A03G03200150.1">
    <property type="protein sequence ID" value="TraesLAC6A03G03200150.1"/>
    <property type="gene ID" value="TraesLAC6A03G03200150"/>
</dbReference>
<dbReference type="Gramene" id="TraesLAC6B03G03383530.1">
    <property type="protein sequence ID" value="TraesLAC6B03G03383530.1"/>
    <property type="gene ID" value="TraesLAC6B03G03383530"/>
</dbReference>
<dbReference type="Gramene" id="TraesLAC6B03G03383550.1">
    <property type="protein sequence ID" value="TraesLAC6B03G03383550.1"/>
    <property type="gene ID" value="TraesLAC6B03G03383550"/>
</dbReference>
<dbReference type="Gramene" id="TraesLAC6B03G03383740.1">
    <property type="protein sequence ID" value="TraesLAC6B03G03383740.1"/>
    <property type="gene ID" value="TraesLAC6B03G03383740"/>
</dbReference>
<dbReference type="Gramene" id="TraesLAC6D03G03606100.1">
    <property type="protein sequence ID" value="TraesLAC6D03G03606100.1"/>
    <property type="gene ID" value="TraesLAC6D03G03606100"/>
</dbReference>
<dbReference type="Gramene" id="TraesLDM6A03G03249450.1">
    <property type="protein sequence ID" value="TraesLDM6A03G03249450.1"/>
    <property type="gene ID" value="TraesLDM6A03G03249450"/>
</dbReference>
<dbReference type="Gramene" id="TraesLDM6B03G03437000.1">
    <property type="protein sequence ID" value="TraesLDM6B03G03437000.1"/>
    <property type="gene ID" value="TraesLDM6B03G03437000"/>
</dbReference>
<dbReference type="Gramene" id="TraesLDM6B03G03437020.1">
    <property type="protein sequence ID" value="TraesLDM6B03G03437020.1"/>
    <property type="gene ID" value="TraesLDM6B03G03437020"/>
</dbReference>
<dbReference type="Gramene" id="TraesLDM6D03G03653760.1">
    <property type="protein sequence ID" value="TraesLDM6D03G03653760.1"/>
    <property type="gene ID" value="TraesLDM6D03G03653760"/>
</dbReference>
<dbReference type="Gramene" id="TraesMAC6A03G03243950.1">
    <property type="protein sequence ID" value="TraesMAC6A03G03243950.1"/>
    <property type="gene ID" value="TraesMAC6A03G03243950"/>
</dbReference>
<dbReference type="Gramene" id="TraesMAC6B03G03430950.1">
    <property type="protein sequence ID" value="TraesMAC6B03G03430950.1"/>
    <property type="gene ID" value="TraesMAC6B03G03430950"/>
</dbReference>
<dbReference type="Gramene" id="TraesMAC6B03G03431140.1">
    <property type="protein sequence ID" value="TraesMAC6B03G03431140.1"/>
    <property type="gene ID" value="TraesMAC6B03G03431140"/>
</dbReference>
<dbReference type="Gramene" id="TraesMAC6B03G03431160.1">
    <property type="protein sequence ID" value="TraesMAC6B03G03431160.1"/>
    <property type="gene ID" value="TraesMAC6B03G03431160"/>
</dbReference>
<dbReference type="Gramene" id="TraesMAC6D03G03650160.1">
    <property type="protein sequence ID" value="TraesMAC6D03G03650160.1"/>
    <property type="gene ID" value="TraesMAC6D03G03650160"/>
</dbReference>
<dbReference type="Gramene" id="TraesNOR6B03G03466580.1">
    <property type="protein sequence ID" value="TraesNOR6B03G03466580.1"/>
    <property type="gene ID" value="TraesNOR6B03G03466580"/>
</dbReference>
<dbReference type="Gramene" id="TraesNOR6B03G03466610.1">
    <property type="protein sequence ID" value="TraesNOR6B03G03466610.1"/>
    <property type="gene ID" value="TraesNOR6B03G03466610"/>
</dbReference>
<dbReference type="Gramene" id="TraesNOR6D03G03691080.1">
    <property type="protein sequence ID" value="TraesNOR6D03G03691080.1"/>
    <property type="gene ID" value="TraesNOR6D03G03691080"/>
</dbReference>
<dbReference type="Gramene" id="TraesPARA_EIv1.0_1896450.1">
    <property type="protein sequence ID" value="TraesPARA_EIv1.0_1896450.1.CDS"/>
    <property type="gene ID" value="TraesPARA_EIv1.0_1896450"/>
</dbReference>
<dbReference type="Gramene" id="TraesPARA_EIv1.0_2004550.1">
    <property type="protein sequence ID" value="TraesPARA_EIv1.0_2004550.1.CDS"/>
    <property type="gene ID" value="TraesPARA_EIv1.0_2004550"/>
</dbReference>
<dbReference type="Gramene" id="TraesPARA_EIv1.0_2004650.1">
    <property type="protein sequence ID" value="TraesPARA_EIv1.0_2004650.1.CDS"/>
    <property type="gene ID" value="TraesPARA_EIv1.0_2004650"/>
</dbReference>
<dbReference type="Gramene" id="TraesPARA_EIv1.0_2004670.1">
    <property type="protein sequence ID" value="TraesPARA_EIv1.0_2004670.1.CDS"/>
    <property type="gene ID" value="TraesPARA_EIv1.0_2004670"/>
</dbReference>
<dbReference type="Gramene" id="TraesPARA_EIv1.0_2217270.1">
    <property type="protein sequence ID" value="TraesPARA_EIv1.0_2217270.1.CDS"/>
    <property type="gene ID" value="TraesPARA_EIv1.0_2217270"/>
</dbReference>
<dbReference type="Gramene" id="TraesRN6B0100098900.1">
    <property type="protein sequence ID" value="TraesRN6B0100098900.1"/>
    <property type="gene ID" value="TraesRN6B0100098900"/>
</dbReference>
<dbReference type="Gramene" id="TraesRN6B0100099900.1">
    <property type="protein sequence ID" value="TraesRN6B0100099900.1"/>
    <property type="gene ID" value="TraesRN6B0100099900"/>
</dbReference>
<dbReference type="Gramene" id="TraesRN6B0100100300.1">
    <property type="protein sequence ID" value="TraesRN6B0100100300.1"/>
    <property type="gene ID" value="TraesRN6B0100100300"/>
</dbReference>
<dbReference type="Gramene" id="TraesROB_scaffold_004261_01G000300.1">
    <property type="protein sequence ID" value="TraesROB_scaffold_004261_01G000300.1"/>
    <property type="gene ID" value="TraesROB_scaffold_004261_01G000300"/>
</dbReference>
<dbReference type="Gramene" id="TraesROB_scaffold_031739_01G000300.1">
    <property type="protein sequence ID" value="TraesROB_scaffold_031739_01G000300.1"/>
    <property type="gene ID" value="TraesROB_scaffold_031739_01G000300"/>
</dbReference>
<dbReference type="Gramene" id="TraesROB_scaffold_041730_01G000500.1">
    <property type="protein sequence ID" value="TraesROB_scaffold_041730_01G000500.1"/>
    <property type="gene ID" value="TraesROB_scaffold_041730_01G000500"/>
</dbReference>
<dbReference type="Gramene" id="TraesROB_scaffold_064611_01G000200.1">
    <property type="protein sequence ID" value="TraesROB_scaffold_064611_01G000200.1"/>
    <property type="gene ID" value="TraesROB_scaffold_064611_01G000200"/>
</dbReference>
<dbReference type="Gramene" id="TraesSTA6A03G03235570.1">
    <property type="protein sequence ID" value="TraesSTA6A03G03235570.1"/>
    <property type="gene ID" value="TraesSTA6A03G03235570"/>
</dbReference>
<dbReference type="Gramene" id="TraesSTA6A03G03235650.1">
    <property type="protein sequence ID" value="TraesSTA6A03G03235650.1"/>
    <property type="gene ID" value="TraesSTA6A03G03235650"/>
</dbReference>
<dbReference type="Gramene" id="TraesSTA6B03G03424170.1">
    <property type="protein sequence ID" value="TraesSTA6B03G03424170.1"/>
    <property type="gene ID" value="TraesSTA6B03G03424170"/>
</dbReference>
<dbReference type="Gramene" id="TraesSTA6B03G03424360.1">
    <property type="protein sequence ID" value="TraesSTA6B03G03424360.1"/>
    <property type="gene ID" value="TraesSTA6B03G03424360"/>
</dbReference>
<dbReference type="Gramene" id="TraesSTA6B03G03424380.1">
    <property type="protein sequence ID" value="TraesSTA6B03G03424380.1"/>
    <property type="gene ID" value="TraesSTA6B03G03424380"/>
</dbReference>
<dbReference type="Gramene" id="TraesSTA6D03G03642970.1">
    <property type="protein sequence ID" value="TraesSTA6D03G03642970.1"/>
    <property type="gene ID" value="TraesSTA6D03G03642970"/>
</dbReference>
<dbReference type="Gramene" id="TraesSYM6A03G03185230.1">
    <property type="protein sequence ID" value="TraesSYM6A03G03185230.1"/>
    <property type="gene ID" value="TraesSYM6A03G03185230"/>
</dbReference>
<dbReference type="Gramene" id="TraesSYM6B03G03376230.1">
    <property type="protein sequence ID" value="TraesSYM6B03G03376230.1"/>
    <property type="gene ID" value="TraesSYM6B03G03376230"/>
</dbReference>
<dbReference type="Gramene" id="TraesSYM6B03G03376240.1">
    <property type="protein sequence ID" value="TraesSYM6B03G03376240.1"/>
    <property type="gene ID" value="TraesSYM6B03G03376240"/>
</dbReference>
<dbReference type="Gramene" id="TraesSYM6B03G03376310.1">
    <property type="protein sequence ID" value="TraesSYM6B03G03376310.1"/>
    <property type="gene ID" value="TraesSYM6B03G03376310"/>
</dbReference>
<dbReference type="Gramene" id="TraesSYM6B03G03376340.1">
    <property type="protein sequence ID" value="TraesSYM6B03G03376340.1"/>
    <property type="gene ID" value="TraesSYM6B03G03376340"/>
</dbReference>
<dbReference type="Gramene" id="TraesSYM6D03G03596130.1">
    <property type="protein sequence ID" value="TraesSYM6D03G03596130.1"/>
    <property type="gene ID" value="TraesSYM6D03G03596130"/>
</dbReference>
<dbReference type="Gramene" id="TraesWEE_scaffold_008448_01G000500.1">
    <property type="protein sequence ID" value="TraesWEE_scaffold_008448_01G000500.1"/>
    <property type="gene ID" value="TraesWEE_scaffold_008448_01G000500"/>
</dbReference>
<dbReference type="Gramene" id="TraesWEE_scaffold_021255_01G000300.1">
    <property type="protein sequence ID" value="TraesWEE_scaffold_021255_01G000300.1"/>
    <property type="gene ID" value="TraesWEE_scaffold_021255_01G000300"/>
</dbReference>
<dbReference type="Gramene" id="TraesWEE_scaffold_059022_01G000200.1">
    <property type="protein sequence ID" value="TraesWEE_scaffold_059022_01G000200.1"/>
    <property type="gene ID" value="TraesWEE_scaffold_059022_01G000200"/>
</dbReference>
<dbReference type="Gramene" id="TraesWEE_scaffold_149981_01G000200.1">
    <property type="protein sequence ID" value="TraesWEE_scaffold_149981_01G000200.1"/>
    <property type="gene ID" value="TraesWEE_scaffold_149981_01G000200"/>
</dbReference>
<dbReference type="eggNOG" id="KOG1756">
    <property type="taxonomic scope" value="Eukaryota"/>
</dbReference>
<dbReference type="OrthoDB" id="10253031at2759"/>
<dbReference type="Proteomes" id="UP000019116">
    <property type="component" value="Chromosome 6B"/>
</dbReference>
<dbReference type="Proteomes" id="UP000019116">
    <property type="component" value="Chromosome 6D"/>
</dbReference>
<dbReference type="GO" id="GO:0000786">
    <property type="term" value="C:nucleosome"/>
    <property type="evidence" value="ECO:0000318"/>
    <property type="project" value="GO_Central"/>
</dbReference>
<dbReference type="GO" id="GO:0005634">
    <property type="term" value="C:nucleus"/>
    <property type="evidence" value="ECO:0000318"/>
    <property type="project" value="GO_Central"/>
</dbReference>
<dbReference type="GO" id="GO:0003677">
    <property type="term" value="F:DNA binding"/>
    <property type="evidence" value="ECO:0007669"/>
    <property type="project" value="UniProtKB-KW"/>
</dbReference>
<dbReference type="GO" id="GO:0046982">
    <property type="term" value="F:protein heterodimerization activity"/>
    <property type="evidence" value="ECO:0007669"/>
    <property type="project" value="InterPro"/>
</dbReference>
<dbReference type="GO" id="GO:0030527">
    <property type="term" value="F:structural constituent of chromatin"/>
    <property type="evidence" value="ECO:0000318"/>
    <property type="project" value="GO_Central"/>
</dbReference>
<dbReference type="GO" id="GO:0031507">
    <property type="term" value="P:heterochromatin formation"/>
    <property type="evidence" value="ECO:0000318"/>
    <property type="project" value="GO_Central"/>
</dbReference>
<dbReference type="CDD" id="cd00074">
    <property type="entry name" value="HFD_H2A"/>
    <property type="match status" value="1"/>
</dbReference>
<dbReference type="FunFam" id="1.10.20.10:FF:000026">
    <property type="entry name" value="Histone H2A"/>
    <property type="match status" value="1"/>
</dbReference>
<dbReference type="Gene3D" id="1.10.20.10">
    <property type="entry name" value="Histone, subunit A"/>
    <property type="match status" value="1"/>
</dbReference>
<dbReference type="InterPro" id="IPR009072">
    <property type="entry name" value="Histone-fold"/>
</dbReference>
<dbReference type="InterPro" id="IPR002119">
    <property type="entry name" value="Histone_H2A"/>
</dbReference>
<dbReference type="InterPro" id="IPR007125">
    <property type="entry name" value="Histone_H2A/H2B/H3"/>
</dbReference>
<dbReference type="InterPro" id="IPR032454">
    <property type="entry name" value="Histone_H2A_C"/>
</dbReference>
<dbReference type="InterPro" id="IPR032458">
    <property type="entry name" value="Histone_H2A_CS"/>
</dbReference>
<dbReference type="PANTHER" id="PTHR23430">
    <property type="entry name" value="HISTONE H2A"/>
    <property type="match status" value="1"/>
</dbReference>
<dbReference type="Pfam" id="PF00125">
    <property type="entry name" value="Histone"/>
    <property type="match status" value="1"/>
</dbReference>
<dbReference type="Pfam" id="PF16211">
    <property type="entry name" value="Histone_H2A_C"/>
    <property type="match status" value="1"/>
</dbReference>
<dbReference type="PRINTS" id="PR00620">
    <property type="entry name" value="HISTONEH2A"/>
</dbReference>
<dbReference type="SMART" id="SM00414">
    <property type="entry name" value="H2A"/>
    <property type="match status" value="1"/>
</dbReference>
<dbReference type="SUPFAM" id="SSF47113">
    <property type="entry name" value="Histone-fold"/>
    <property type="match status" value="1"/>
</dbReference>
<dbReference type="PROSITE" id="PS00046">
    <property type="entry name" value="HISTONE_H2A"/>
    <property type="match status" value="1"/>
</dbReference>
<accession>P02275</accession>
<accession>Q43310</accession>
<accession>Q9SB25</accession>
<keyword id="KW-0158">Chromosome</keyword>
<keyword id="KW-0903">Direct protein sequencing</keyword>
<keyword id="KW-0238">DNA-binding</keyword>
<keyword id="KW-0544">Nucleosome core</keyword>
<keyword id="KW-0539">Nucleus</keyword>
<keyword id="KW-0597">Phosphoprotein</keyword>
<keyword id="KW-1185">Reference proteome</keyword>
<organism>
    <name type="scientific">Triticum aestivum</name>
    <name type="common">Wheat</name>
    <dbReference type="NCBI Taxonomy" id="4565"/>
    <lineage>
        <taxon>Eukaryota</taxon>
        <taxon>Viridiplantae</taxon>
        <taxon>Streptophyta</taxon>
        <taxon>Embryophyta</taxon>
        <taxon>Tracheophyta</taxon>
        <taxon>Spermatophyta</taxon>
        <taxon>Magnoliopsida</taxon>
        <taxon>Liliopsida</taxon>
        <taxon>Poales</taxon>
        <taxon>Poaceae</taxon>
        <taxon>BOP clade</taxon>
        <taxon>Pooideae</taxon>
        <taxon>Triticodae</taxon>
        <taxon>Triticeae</taxon>
        <taxon>Triticinae</taxon>
        <taxon>Triticum</taxon>
    </lineage>
</organism>
<comment type="function">
    <text>Core component of nucleosome. Nucleosomes wrap and compact DNA into chromatin, limiting DNA accessibility to the cellular machineries which require DNA as a template. Histones thereby play a central role in transcription regulation, DNA repair, DNA replication and chromosomal stability. DNA accessibility is regulated via a complex set of post-translational modifications of histones, also called histone code, and nucleosome remodeling.</text>
</comment>
<comment type="subunit">
    <text>The nucleosome is a histone octamer containing two molecules each of H2A, H2B, H3 and H4 assembled in one H3-H4 heterotetramer and two H2A-H2B heterodimers. The octamer wraps approximately 147 bp of DNA.</text>
</comment>
<comment type="subcellular location">
    <subcellularLocation>
        <location>Nucleus</location>
    </subcellularLocation>
    <subcellularLocation>
        <location>Chromosome</location>
    </subcellularLocation>
</comment>
<comment type="tissue specificity">
    <text evidence="5">Expressed preferentially in meristematic tissues of young seedlings, in stigma and ovary but not in pollen.</text>
</comment>
<comment type="developmental stage">
    <text evidence="5">S phase-specific expression.</text>
</comment>
<comment type="domain">
    <text>Contains 2 SPKK motifs which may interact with the minor groove of A/T-rich DNA sites. Phosphorylation of this motif may regulate DNA binding. This motif is reiterated in both termini of histone H1 and in the N-terminus of sea urchin histones H2B, but its presence in the C-terminus seems to be unique to plant H2A.</text>
</comment>
<comment type="PTM">
    <text evidence="2">Phosphorylated within its C-terminal part, probably at the SPKK motifs.</text>
</comment>
<comment type="similarity">
    <text evidence="6">Belongs to the histone H2A family.</text>
</comment>
<proteinExistence type="evidence at protein level"/>
<feature type="initiator methionine" description="Removed" evidence="3 4">
    <location>
        <position position="1"/>
    </location>
</feature>
<feature type="chain" id="PRO_0000055291" description="Histone H2A.1">
    <location>
        <begin position="2"/>
        <end position="146"/>
    </location>
</feature>
<feature type="region of interest" description="Disordered" evidence="1">
    <location>
        <begin position="118"/>
        <end position="146"/>
    </location>
</feature>
<feature type="short sequence motif" description="SPKK motif 1">
    <location>
        <begin position="128"/>
        <end position="131"/>
    </location>
</feature>
<feature type="short sequence motif" description="SPKK motif 2">
    <location>
        <begin position="137"/>
        <end position="140"/>
    </location>
</feature>
<feature type="compositionally biased region" description="Basic residues" evidence="1">
    <location>
        <begin position="129"/>
        <end position="146"/>
    </location>
</feature>
<feature type="sequence conflict" description="In Ref. 2; CAA64423/AAB00193." evidence="6" ref="2">
    <original>V</original>
    <variation>I</variation>
    <location>
        <position position="41"/>
    </location>
</feature>
<feature type="sequence conflict" description="In Ref. 2; CAA64423/AAB00193." evidence="6" ref="2">
    <original>N</original>
    <variation>T</variation>
    <location>
        <position position="108"/>
    </location>
</feature>
<name>H2A1_WHEAT</name>
<evidence type="ECO:0000256" key="1">
    <source>
        <dbReference type="SAM" id="MobiDB-lite"/>
    </source>
</evidence>
<evidence type="ECO:0000269" key="2">
    <source>
    </source>
</evidence>
<evidence type="ECO:0000269" key="3">
    <source>
    </source>
</evidence>
<evidence type="ECO:0000269" key="4">
    <source>
    </source>
</evidence>
<evidence type="ECO:0000269" key="5">
    <source>
    </source>
</evidence>
<evidence type="ECO:0000305" key="6"/>
<reference key="1">
    <citation type="journal article" date="1995" name="Biochim. Biophys. Acta">
        <title>Differential expression of the two types of histone H2A genes in wheat.</title>
        <authorList>
            <person name="Huh G.H."/>
            <person name="Matsuura Y."/>
            <person name="Meshi T."/>
            <person name="Iwabuchi M."/>
        </authorList>
    </citation>
    <scope>NUCLEOTIDE SEQUENCE [MRNA]</scope>
</reference>
<reference key="2">
    <citation type="journal article" date="1997" name="Plant Mol. Biol.">
        <title>Structural characteristics of two wheat histone H2A genes encoding distinct types of variants and functional differences in their promoter activity.</title>
        <authorList>
            <person name="Huh G.H."/>
            <person name="Nakayama T."/>
            <person name="Meshi T."/>
            <person name="Iwabuchi M."/>
        </authorList>
    </citation>
    <scope>NUCLEOTIDE SEQUENCE [GENOMIC DNA]</scope>
    <scope>DEVELOPMENTAL STAGE</scope>
    <scope>TISSUE SPECIFICITY</scope>
</reference>
<reference key="3">
    <citation type="journal article" date="1985" name="Eur. J. Biochem.">
        <title>The amino acid sequence of wheat histone H2A(1). A core histone with a C-terminal extension.</title>
        <authorList>
            <person name="Rodrigues J.A."/>
            <person name="Brandt W.F."/>
            <person name="von Holt C."/>
        </authorList>
    </citation>
    <scope>PROTEIN SEQUENCE OF 2-146</scope>
    <source>
        <tissue>Germ</tissue>
    </source>
</reference>
<reference key="4">
    <citation type="journal article" date="1979" name="Biochim. Biophys. Acta">
        <title>Plant histone 2 from wheat germ, a family of histone H2a variants. Partial amino acid sequences.</title>
        <authorList>
            <person name="Rodrigues J.A."/>
            <person name="Brandt W.F."/>
            <person name="von Holt C."/>
        </authorList>
    </citation>
    <scope>PROTEIN SEQUENCE OF 2-55</scope>
</reference>
<reference key="5">
    <citation type="journal article" date="1990" name="Plant Physiol.">
        <title>Phosphorylation of plant H2A histones.</title>
        <authorList>
            <person name="Green G.R."/>
            <person name="Gustavsen L.C."/>
            <person name="Poccia D.L."/>
        </authorList>
    </citation>
    <scope>PHOSPHORYLATION</scope>
</reference>